<proteinExistence type="inferred from homology"/>
<protein>
    <recommendedName>
        <fullName evidence="1">23S rRNA (uracil(1939)-C(5))-methyltransferase RlmD</fullName>
        <ecNumber evidence="1">2.1.1.190</ecNumber>
    </recommendedName>
    <alternativeName>
        <fullName evidence="1">23S rRNA(m5U1939)-methyltransferase</fullName>
    </alternativeName>
</protein>
<reference key="1">
    <citation type="journal article" date="2008" name="J. Bacteriol.">
        <title>Comparative genome sequence analysis of multidrug-resistant Acinetobacter baumannii.</title>
        <authorList>
            <person name="Adams M.D."/>
            <person name="Goglin K."/>
            <person name="Molyneaux N."/>
            <person name="Hujer K.M."/>
            <person name="Lavender H."/>
            <person name="Jamison J.J."/>
            <person name="MacDonald I.J."/>
            <person name="Martin K.M."/>
            <person name="Russo T."/>
            <person name="Campagnari A.A."/>
            <person name="Hujer A.M."/>
            <person name="Bonomo R.A."/>
            <person name="Gill S.R."/>
        </authorList>
    </citation>
    <scope>NUCLEOTIDE SEQUENCE [LARGE SCALE GENOMIC DNA]</scope>
    <source>
        <strain>AB0057</strain>
    </source>
</reference>
<accession>B7I675</accession>
<organism>
    <name type="scientific">Acinetobacter baumannii (strain AB0057)</name>
    <dbReference type="NCBI Taxonomy" id="480119"/>
    <lineage>
        <taxon>Bacteria</taxon>
        <taxon>Pseudomonadati</taxon>
        <taxon>Pseudomonadota</taxon>
        <taxon>Gammaproteobacteria</taxon>
        <taxon>Moraxellales</taxon>
        <taxon>Moraxellaceae</taxon>
        <taxon>Acinetobacter</taxon>
        <taxon>Acinetobacter calcoaceticus/baumannii complex</taxon>
    </lineage>
</organism>
<feature type="chain" id="PRO_1000200834" description="23S rRNA (uracil(1939)-C(5))-methyltransferase RlmD">
    <location>
        <begin position="1"/>
        <end position="462"/>
    </location>
</feature>
<feature type="domain" description="TRAM" evidence="1">
    <location>
        <begin position="6"/>
        <end position="76"/>
    </location>
</feature>
<feature type="active site" description="Nucleophile" evidence="1">
    <location>
        <position position="414"/>
    </location>
</feature>
<feature type="binding site" evidence="1">
    <location>
        <position position="90"/>
    </location>
    <ligand>
        <name>[4Fe-4S] cluster</name>
        <dbReference type="ChEBI" id="CHEBI:49883"/>
    </ligand>
</feature>
<feature type="binding site" evidence="1">
    <location>
        <position position="96"/>
    </location>
    <ligand>
        <name>[4Fe-4S] cluster</name>
        <dbReference type="ChEBI" id="CHEBI:49883"/>
    </ligand>
</feature>
<feature type="binding site" evidence="1">
    <location>
        <position position="99"/>
    </location>
    <ligand>
        <name>[4Fe-4S] cluster</name>
        <dbReference type="ChEBI" id="CHEBI:49883"/>
    </ligand>
</feature>
<feature type="binding site" evidence="1">
    <location>
        <position position="178"/>
    </location>
    <ligand>
        <name>[4Fe-4S] cluster</name>
        <dbReference type="ChEBI" id="CHEBI:49883"/>
    </ligand>
</feature>
<feature type="binding site" evidence="1">
    <location>
        <position position="287"/>
    </location>
    <ligand>
        <name>S-adenosyl-L-methionine</name>
        <dbReference type="ChEBI" id="CHEBI:59789"/>
    </ligand>
</feature>
<feature type="binding site" evidence="1">
    <location>
        <position position="316"/>
    </location>
    <ligand>
        <name>S-adenosyl-L-methionine</name>
        <dbReference type="ChEBI" id="CHEBI:59789"/>
    </ligand>
</feature>
<feature type="binding site" evidence="1">
    <location>
        <position position="321"/>
    </location>
    <ligand>
        <name>S-adenosyl-L-methionine</name>
        <dbReference type="ChEBI" id="CHEBI:59789"/>
    </ligand>
</feature>
<feature type="binding site" evidence="1">
    <location>
        <position position="340"/>
    </location>
    <ligand>
        <name>S-adenosyl-L-methionine</name>
        <dbReference type="ChEBI" id="CHEBI:59789"/>
    </ligand>
</feature>
<feature type="binding site" evidence="1">
    <location>
        <position position="367"/>
    </location>
    <ligand>
        <name>S-adenosyl-L-methionine</name>
        <dbReference type="ChEBI" id="CHEBI:59789"/>
    </ligand>
</feature>
<feature type="binding site" evidence="1">
    <location>
        <position position="388"/>
    </location>
    <ligand>
        <name>S-adenosyl-L-methionine</name>
        <dbReference type="ChEBI" id="CHEBI:59789"/>
    </ligand>
</feature>
<sequence length="462" mass="52446">MKQQAKSRKPQQPEYIFQVETLSHEGRGIAHYGSHPDHPADKHGKKVFIRYALPGETVKAQITHEAKRLEEAEMVELLAEPSANRVEAVCPHYGICGGCSMQHIHPDEQIHLKQNVLQSHLQHFAGIQPEQWLEPIRSLQSDYRRRARIGVRYLPKQDRLILGFREHHSNRLTSIHTCSVLDKKLSDNLPELRNLLQSLKGKAHIGHVELAKGDHEISLLVRHIEKLNNADVNQLRQFALHKGWQLYLQPKDQSLRRIDEEQGAMRLHYALNAFDVNFAFSPLDFTQVNATVNEQMVQLACELLQLQQGERVLDLFCGLGNFSLPLARCVGAKGQVVGVEASEEMVQRATDNAKRNNLVQASFFSQDLTKDFSHHSWANQGFDALLIDPPRAGAYEIMQYVPNFGAKRIVYVSCNPATLARDAGVLVQHGYQLKKAAVMDMFTHTEHVESIALFEKIQEIND</sequence>
<keyword id="KW-0004">4Fe-4S</keyword>
<keyword id="KW-0408">Iron</keyword>
<keyword id="KW-0411">Iron-sulfur</keyword>
<keyword id="KW-0479">Metal-binding</keyword>
<keyword id="KW-0489">Methyltransferase</keyword>
<keyword id="KW-0698">rRNA processing</keyword>
<keyword id="KW-0949">S-adenosyl-L-methionine</keyword>
<keyword id="KW-0808">Transferase</keyword>
<comment type="function">
    <text evidence="1">Catalyzes the formation of 5-methyl-uridine at position 1939 (m5U1939) in 23S rRNA.</text>
</comment>
<comment type="catalytic activity">
    <reaction evidence="1">
        <text>uridine(1939) in 23S rRNA + S-adenosyl-L-methionine = 5-methyluridine(1939) in 23S rRNA + S-adenosyl-L-homocysteine + H(+)</text>
        <dbReference type="Rhea" id="RHEA:42908"/>
        <dbReference type="Rhea" id="RHEA-COMP:10278"/>
        <dbReference type="Rhea" id="RHEA-COMP:10279"/>
        <dbReference type="ChEBI" id="CHEBI:15378"/>
        <dbReference type="ChEBI" id="CHEBI:57856"/>
        <dbReference type="ChEBI" id="CHEBI:59789"/>
        <dbReference type="ChEBI" id="CHEBI:65315"/>
        <dbReference type="ChEBI" id="CHEBI:74447"/>
        <dbReference type="EC" id="2.1.1.190"/>
    </reaction>
</comment>
<comment type="similarity">
    <text evidence="1">Belongs to the class I-like SAM-binding methyltransferase superfamily. RNA M5U methyltransferase family. RlmD subfamily.</text>
</comment>
<evidence type="ECO:0000255" key="1">
    <source>
        <dbReference type="HAMAP-Rule" id="MF_01010"/>
    </source>
</evidence>
<dbReference type="EC" id="2.1.1.190" evidence="1"/>
<dbReference type="EMBL" id="CP001182">
    <property type="protein sequence ID" value="ACJ40102.1"/>
    <property type="molecule type" value="Genomic_DNA"/>
</dbReference>
<dbReference type="SMR" id="B7I675"/>
<dbReference type="KEGG" id="abn:AB57_0682"/>
<dbReference type="HOGENOM" id="CLU_014689_8_2_6"/>
<dbReference type="Proteomes" id="UP000007094">
    <property type="component" value="Chromosome"/>
</dbReference>
<dbReference type="GO" id="GO:0051539">
    <property type="term" value="F:4 iron, 4 sulfur cluster binding"/>
    <property type="evidence" value="ECO:0007669"/>
    <property type="project" value="UniProtKB-KW"/>
</dbReference>
<dbReference type="GO" id="GO:0005506">
    <property type="term" value="F:iron ion binding"/>
    <property type="evidence" value="ECO:0007669"/>
    <property type="project" value="UniProtKB-UniRule"/>
</dbReference>
<dbReference type="GO" id="GO:0003723">
    <property type="term" value="F:RNA binding"/>
    <property type="evidence" value="ECO:0007669"/>
    <property type="project" value="InterPro"/>
</dbReference>
<dbReference type="GO" id="GO:0070041">
    <property type="term" value="F:rRNA (uridine-C5-)-methyltransferase activity"/>
    <property type="evidence" value="ECO:0007669"/>
    <property type="project" value="UniProtKB-UniRule"/>
</dbReference>
<dbReference type="GO" id="GO:0070475">
    <property type="term" value="P:rRNA base methylation"/>
    <property type="evidence" value="ECO:0007669"/>
    <property type="project" value="TreeGrafter"/>
</dbReference>
<dbReference type="CDD" id="cd02440">
    <property type="entry name" value="AdoMet_MTases"/>
    <property type="match status" value="1"/>
</dbReference>
<dbReference type="FunFam" id="3.40.50.150:FF:000009">
    <property type="entry name" value="23S rRNA (Uracil(1939)-C(5))-methyltransferase RlmD"/>
    <property type="match status" value="1"/>
</dbReference>
<dbReference type="Gene3D" id="2.40.50.1070">
    <property type="match status" value="1"/>
</dbReference>
<dbReference type="Gene3D" id="2.40.50.140">
    <property type="entry name" value="Nucleic acid-binding proteins"/>
    <property type="match status" value="1"/>
</dbReference>
<dbReference type="Gene3D" id="3.40.50.150">
    <property type="entry name" value="Vaccinia Virus protein VP39"/>
    <property type="match status" value="1"/>
</dbReference>
<dbReference type="HAMAP" id="MF_01010">
    <property type="entry name" value="23SrRNA_methyltr_RlmD"/>
    <property type="match status" value="1"/>
</dbReference>
<dbReference type="InterPro" id="IPR001566">
    <property type="entry name" value="23S_rRNA_MeTrfase_RlmD"/>
</dbReference>
<dbReference type="InterPro" id="IPR030390">
    <property type="entry name" value="MeTrfase_TrmA_AS"/>
</dbReference>
<dbReference type="InterPro" id="IPR012340">
    <property type="entry name" value="NA-bd_OB-fold"/>
</dbReference>
<dbReference type="InterPro" id="IPR029063">
    <property type="entry name" value="SAM-dependent_MTases_sf"/>
</dbReference>
<dbReference type="InterPro" id="IPR002792">
    <property type="entry name" value="TRAM_dom"/>
</dbReference>
<dbReference type="InterPro" id="IPR010280">
    <property type="entry name" value="U5_MeTrfase_fam"/>
</dbReference>
<dbReference type="NCBIfam" id="NF009639">
    <property type="entry name" value="PRK13168.1"/>
    <property type="match status" value="1"/>
</dbReference>
<dbReference type="NCBIfam" id="TIGR00479">
    <property type="entry name" value="rumA"/>
    <property type="match status" value="1"/>
</dbReference>
<dbReference type="PANTHER" id="PTHR11061:SF49">
    <property type="entry name" value="23S RRNA (URACIL(1939)-C(5))-METHYLTRANSFERASE RLMD"/>
    <property type="match status" value="1"/>
</dbReference>
<dbReference type="PANTHER" id="PTHR11061">
    <property type="entry name" value="RNA M5U METHYLTRANSFERASE"/>
    <property type="match status" value="1"/>
</dbReference>
<dbReference type="Pfam" id="PF01938">
    <property type="entry name" value="TRAM"/>
    <property type="match status" value="1"/>
</dbReference>
<dbReference type="Pfam" id="PF05958">
    <property type="entry name" value="tRNA_U5-meth_tr"/>
    <property type="match status" value="1"/>
</dbReference>
<dbReference type="SUPFAM" id="SSF50249">
    <property type="entry name" value="Nucleic acid-binding proteins"/>
    <property type="match status" value="1"/>
</dbReference>
<dbReference type="SUPFAM" id="SSF53335">
    <property type="entry name" value="S-adenosyl-L-methionine-dependent methyltransferases"/>
    <property type="match status" value="1"/>
</dbReference>
<dbReference type="PROSITE" id="PS51687">
    <property type="entry name" value="SAM_MT_RNA_M5U"/>
    <property type="match status" value="1"/>
</dbReference>
<dbReference type="PROSITE" id="PS50926">
    <property type="entry name" value="TRAM"/>
    <property type="match status" value="1"/>
</dbReference>
<dbReference type="PROSITE" id="PS01230">
    <property type="entry name" value="TRMA_1"/>
    <property type="match status" value="1"/>
</dbReference>
<gene>
    <name evidence="1" type="primary">rlmD</name>
    <name type="synonym">rumA</name>
    <name type="ordered locus">AB57_0682</name>
</gene>
<name>RLMD_ACIB5</name>